<gene>
    <name type="ORF">PGUG_00921</name>
</gene>
<keyword id="KW-0124">Carnitine biosynthesis</keyword>
<keyword id="KW-0963">Cytoplasm</keyword>
<keyword id="KW-0223">Dioxygenase</keyword>
<keyword id="KW-0408">Iron</keyword>
<keyword id="KW-0479">Metal-binding</keyword>
<keyword id="KW-0560">Oxidoreductase</keyword>
<keyword id="KW-1185">Reference proteome</keyword>
<name>TMLH_PICGU</name>
<dbReference type="EC" id="1.14.11.8"/>
<dbReference type="EMBL" id="DQ297454">
    <property type="protein sequence ID" value="ABB87188.2"/>
    <property type="molecule type" value="Genomic_DNA"/>
</dbReference>
<dbReference type="EMBL" id="CH408155">
    <property type="protein sequence ID" value="EDK36823.2"/>
    <property type="molecule type" value="Genomic_DNA"/>
</dbReference>
<dbReference type="RefSeq" id="XP_001487544.2">
    <property type="nucleotide sequence ID" value="XM_001487494.1"/>
</dbReference>
<dbReference type="SMR" id="A5DCB6"/>
<dbReference type="STRING" id="294746.A5DCB6"/>
<dbReference type="GeneID" id="5128728"/>
<dbReference type="KEGG" id="pgu:PGUG_00921"/>
<dbReference type="eggNOG" id="KOG3889">
    <property type="taxonomic scope" value="Eukaryota"/>
</dbReference>
<dbReference type="HOGENOM" id="CLU_021859_2_2_1"/>
<dbReference type="InParanoid" id="A5DCB6"/>
<dbReference type="OMA" id="EKVCIQP"/>
<dbReference type="OrthoDB" id="408743at2759"/>
<dbReference type="UniPathway" id="UPA00118"/>
<dbReference type="Proteomes" id="UP000001997">
    <property type="component" value="Unassembled WGS sequence"/>
</dbReference>
<dbReference type="GO" id="GO:0005739">
    <property type="term" value="C:mitochondrion"/>
    <property type="evidence" value="ECO:0007669"/>
    <property type="project" value="TreeGrafter"/>
</dbReference>
<dbReference type="GO" id="GO:0005506">
    <property type="term" value="F:iron ion binding"/>
    <property type="evidence" value="ECO:0007669"/>
    <property type="project" value="InterPro"/>
</dbReference>
<dbReference type="GO" id="GO:0050353">
    <property type="term" value="F:trimethyllysine dioxygenase activity"/>
    <property type="evidence" value="ECO:0007669"/>
    <property type="project" value="UniProtKB-EC"/>
</dbReference>
<dbReference type="GO" id="GO:0045329">
    <property type="term" value="P:carnitine biosynthetic process"/>
    <property type="evidence" value="ECO:0007669"/>
    <property type="project" value="UniProtKB-UniPathway"/>
</dbReference>
<dbReference type="CDD" id="cd00250">
    <property type="entry name" value="CAS_like"/>
    <property type="match status" value="1"/>
</dbReference>
<dbReference type="FunFam" id="3.30.2020.30:FF:000002">
    <property type="entry name" value="Putative gamma-butyrobetaine dioxygenase"/>
    <property type="match status" value="1"/>
</dbReference>
<dbReference type="FunFam" id="3.60.130.10:FF:000001">
    <property type="entry name" value="Trimethyllysine dioxygenase, mitochondrial"/>
    <property type="match status" value="1"/>
</dbReference>
<dbReference type="Gene3D" id="3.30.2020.30">
    <property type="match status" value="1"/>
</dbReference>
<dbReference type="Gene3D" id="3.60.130.10">
    <property type="entry name" value="Clavaminate synthase-like"/>
    <property type="match status" value="1"/>
</dbReference>
<dbReference type="InterPro" id="IPR050411">
    <property type="entry name" value="AlphaKG_dependent_hydroxylases"/>
</dbReference>
<dbReference type="InterPro" id="IPR010376">
    <property type="entry name" value="GBBH-like_N"/>
</dbReference>
<dbReference type="InterPro" id="IPR038492">
    <property type="entry name" value="GBBH-like_N_sf"/>
</dbReference>
<dbReference type="InterPro" id="IPR042098">
    <property type="entry name" value="TauD-like_sf"/>
</dbReference>
<dbReference type="InterPro" id="IPR003819">
    <property type="entry name" value="TauD/TfdA-like"/>
</dbReference>
<dbReference type="InterPro" id="IPR012776">
    <property type="entry name" value="Trimethyllysine_dOase"/>
</dbReference>
<dbReference type="NCBIfam" id="TIGR02410">
    <property type="entry name" value="carnitine_TMLD"/>
    <property type="match status" value="1"/>
</dbReference>
<dbReference type="PANTHER" id="PTHR10696">
    <property type="entry name" value="GAMMA-BUTYROBETAINE HYDROXYLASE-RELATED"/>
    <property type="match status" value="1"/>
</dbReference>
<dbReference type="PANTHER" id="PTHR10696:SF51">
    <property type="entry name" value="TRIMETHYLLYSINE DIOXYGENASE, MITOCHONDRIAL"/>
    <property type="match status" value="1"/>
</dbReference>
<dbReference type="Pfam" id="PF06155">
    <property type="entry name" value="GBBH-like_N"/>
    <property type="match status" value="1"/>
</dbReference>
<dbReference type="Pfam" id="PF02668">
    <property type="entry name" value="TauD"/>
    <property type="match status" value="1"/>
</dbReference>
<dbReference type="SUPFAM" id="SSF51197">
    <property type="entry name" value="Clavaminate synthase-like"/>
    <property type="match status" value="1"/>
</dbReference>
<reference key="1">
    <citation type="submission" date="2008-06" db="EMBL/GenBank/DDBJ databases">
        <title>Isolation and phylogenetic relationship of aldose reductase in Candida species.</title>
        <authorList>
            <person name="Guo C."/>
            <person name="He P."/>
            <person name="Lu D."/>
            <person name="An S."/>
            <person name="Ning J."/>
        </authorList>
    </citation>
    <scope>NUCLEOTIDE SEQUENCE [GENOMIC DNA]</scope>
</reference>
<reference key="2">
    <citation type="journal article" date="2009" name="Nature">
        <title>Evolution of pathogenicity and sexual reproduction in eight Candida genomes.</title>
        <authorList>
            <person name="Butler G."/>
            <person name="Rasmussen M.D."/>
            <person name="Lin M.F."/>
            <person name="Santos M.A.S."/>
            <person name="Sakthikumar S."/>
            <person name="Munro C.A."/>
            <person name="Rheinbay E."/>
            <person name="Grabherr M."/>
            <person name="Forche A."/>
            <person name="Reedy J.L."/>
            <person name="Agrafioti I."/>
            <person name="Arnaud M.B."/>
            <person name="Bates S."/>
            <person name="Brown A.J.P."/>
            <person name="Brunke S."/>
            <person name="Costanzo M.C."/>
            <person name="Fitzpatrick D.A."/>
            <person name="de Groot P.W.J."/>
            <person name="Harris D."/>
            <person name="Hoyer L.L."/>
            <person name="Hube B."/>
            <person name="Klis F.M."/>
            <person name="Kodira C."/>
            <person name="Lennard N."/>
            <person name="Logue M.E."/>
            <person name="Martin R."/>
            <person name="Neiman A.M."/>
            <person name="Nikolaou E."/>
            <person name="Quail M.A."/>
            <person name="Quinn J."/>
            <person name="Santos M.C."/>
            <person name="Schmitzberger F.F."/>
            <person name="Sherlock G."/>
            <person name="Shah P."/>
            <person name="Silverstein K.A.T."/>
            <person name="Skrzypek M.S."/>
            <person name="Soll D."/>
            <person name="Staggs R."/>
            <person name="Stansfield I."/>
            <person name="Stumpf M.P.H."/>
            <person name="Sudbery P.E."/>
            <person name="Srikantha T."/>
            <person name="Zeng Q."/>
            <person name="Berman J."/>
            <person name="Berriman M."/>
            <person name="Heitman J."/>
            <person name="Gow N.A.R."/>
            <person name="Lorenz M.C."/>
            <person name="Birren B.W."/>
            <person name="Kellis M."/>
            <person name="Cuomo C.A."/>
        </authorList>
    </citation>
    <scope>NUCLEOTIDE SEQUENCE [LARGE SCALE GENOMIC DNA]</scope>
    <source>
        <strain>ATCC 6260 / CBS 566 / DSM 6381 / JCM 1539 / NBRC 10279 / NRRL Y-324</strain>
    </source>
</reference>
<feature type="chain" id="PRO_0000295035" description="Trimethyllysine dioxygenase">
    <location>
        <begin position="1"/>
        <end position="399"/>
    </location>
</feature>
<feature type="binding site" evidence="1">
    <location>
        <position position="214"/>
    </location>
    <ligand>
        <name>Fe cation</name>
        <dbReference type="ChEBI" id="CHEBI:24875"/>
        <note>catalytic</note>
    </ligand>
</feature>
<feature type="binding site" evidence="1">
    <location>
        <position position="216"/>
    </location>
    <ligand>
        <name>Fe cation</name>
        <dbReference type="ChEBI" id="CHEBI:24875"/>
        <note>catalytic</note>
    </ligand>
</feature>
<feature type="binding site" evidence="1">
    <location>
        <position position="360"/>
    </location>
    <ligand>
        <name>Fe cation</name>
        <dbReference type="ChEBI" id="CHEBI:24875"/>
        <note>catalytic</note>
    </ligand>
</feature>
<feature type="sequence conflict" description="In Ref. 1; ABB87188." evidence="2" ref="1">
    <original>N</original>
    <variation>K</variation>
    <location>
        <position position="386"/>
    </location>
</feature>
<accession>A5DCB6</accession>
<accession>Q2V571</accession>
<evidence type="ECO:0000250" key="1"/>
<evidence type="ECO:0000305" key="2"/>
<protein>
    <recommendedName>
        <fullName>Trimethyllysine dioxygenase</fullName>
        <ecNumber>1.14.11.8</ecNumber>
    </recommendedName>
    <alternativeName>
        <fullName>Epsilon-trimethyllysine 2-oxoglutarate dioxygenase</fullName>
    </alternativeName>
    <alternativeName>
        <fullName>TML hydroxylase</fullName>
    </alternativeName>
    <alternativeName>
        <fullName>TML-alpha-ketoglutarate dioxygenase</fullName>
        <shortName>TML dioxygenase</shortName>
        <shortName>TMLD</shortName>
    </alternativeName>
</protein>
<organism>
    <name type="scientific">Meyerozyma guilliermondii (strain ATCC 6260 / CBS 566 / DSM 6381 / JCM 1539 / NBRC 10279 / NRRL Y-324)</name>
    <name type="common">Yeast</name>
    <name type="synonym">Candida guilliermondii</name>
    <dbReference type="NCBI Taxonomy" id="294746"/>
    <lineage>
        <taxon>Eukaryota</taxon>
        <taxon>Fungi</taxon>
        <taxon>Dikarya</taxon>
        <taxon>Ascomycota</taxon>
        <taxon>Saccharomycotina</taxon>
        <taxon>Pichiomycetes</taxon>
        <taxon>Debaryomycetaceae</taxon>
        <taxon>Meyerozyma</taxon>
    </lineage>
</organism>
<sequence length="399" mass="46267">MTKMDHKIVKTSYDGDAVSVEWDGGASAKFDNIWLRDNCHCSECYYDATKQRLLNSCSIPDDIAPIKVDSSPTKLKIVWNHEEHQSEYECRWLVIHSYNPRQIPVTEKVSGEREILAREYWTVKDMEGRLPSVDFKTVMASTDENEEPIKDWCLKIWKHGFCFIDNVPVDPQETEKLCEKLMYIRPTHYGGFWDFTSDLSKNDTAYTNIDISSHTDGTYWSDTPGLQLFHLLMHEGTGGTTSLVDAFHCAEILKKEHPESFELLTRIPVPAHSAGEEKVCIQPDIPQPIFKLDTNGELIQVRWNQSDRSTMDSWENPSEVVKFYRAIKQWHKIISDPANELFYQLRPGQCLIFDNWRCFHSRTEFTGKRRMCGAYINRDDFVSRLNLLNIGRQPVLDAI</sequence>
<comment type="function">
    <text evidence="1">Converts trimethyllysine (TML) into hydroxytrimethyllysine (HTML).</text>
</comment>
<comment type="catalytic activity">
    <reaction>
        <text>N(6),N(6),N(6)-trimethyl-L-lysine + 2-oxoglutarate + O2 = (3S)-3-hydroxy-N(6),N(6),N(6)-trimethyl-L-lysine + succinate + CO2</text>
        <dbReference type="Rhea" id="RHEA:14181"/>
        <dbReference type="ChEBI" id="CHEBI:15379"/>
        <dbReference type="ChEBI" id="CHEBI:16526"/>
        <dbReference type="ChEBI" id="CHEBI:16810"/>
        <dbReference type="ChEBI" id="CHEBI:30031"/>
        <dbReference type="ChEBI" id="CHEBI:58100"/>
        <dbReference type="ChEBI" id="CHEBI:141499"/>
        <dbReference type="EC" id="1.14.11.8"/>
    </reaction>
</comment>
<comment type="cofactor">
    <cofactor evidence="1">
        <name>Fe(2+)</name>
        <dbReference type="ChEBI" id="CHEBI:29033"/>
    </cofactor>
    <text evidence="1">Binds 1 Fe(2+) ion per subunit.</text>
</comment>
<comment type="cofactor">
    <cofactor evidence="1">
        <name>L-ascorbate</name>
        <dbReference type="ChEBI" id="CHEBI:38290"/>
    </cofactor>
</comment>
<comment type="pathway">
    <text>Amine and polyamine biosynthesis; carnitine biosynthesis.</text>
</comment>
<comment type="subcellular location">
    <subcellularLocation>
        <location evidence="1">Cytoplasm</location>
    </subcellularLocation>
</comment>
<comment type="similarity">
    <text evidence="2">Belongs to the gamma-BBH/TMLD family.</text>
</comment>
<proteinExistence type="inferred from homology"/>